<gene>
    <name type="primary">FMP522</name>
    <name type="ORF">PICST_57883</name>
</gene>
<accession>A3LSB6</accession>
<proteinExistence type="inferred from homology"/>
<sequence>MAAGAFILGSTGLCGYQMLRFAEKSSLFDKISTVGRKLPDFKSEKVHLIQEADSDKWPEIIEKEAKGYSTFFSGLGSTIGAAGSAENFERIDYGINYAAAKAAKKAGVQTFVLISAPLSNANSRFLYIRTKGKLEDDIIALKFARTIILRPGILLGEREKFRSITESIIVGISKYTHGNFLSALTVPAYGEEMGQIAVNLASEPIPQSQTEPIVNIISAKQITNLAKKL</sequence>
<reference key="1">
    <citation type="journal article" date="2007" name="Nat. Biotechnol.">
        <title>Genome sequence of the lignocellulose-bioconverting and xylose-fermenting yeast Pichia stipitis.</title>
        <authorList>
            <person name="Jeffries T.W."/>
            <person name="Grigoriev I.V."/>
            <person name="Grimwood J."/>
            <person name="Laplaza J.M."/>
            <person name="Aerts A."/>
            <person name="Salamov A."/>
            <person name="Schmutz J."/>
            <person name="Lindquist E."/>
            <person name="Dehal P."/>
            <person name="Shapiro H."/>
            <person name="Jin Y.-S."/>
            <person name="Passoth V."/>
            <person name="Richardson P.M."/>
        </authorList>
    </citation>
    <scope>NUCLEOTIDE SEQUENCE [LARGE SCALE GENOMIC DNA]</scope>
    <source>
        <strain>ATCC 58785 / CBS 6054 / NBRC 10063 / NRRL Y-11545</strain>
    </source>
</reference>
<feature type="transit peptide" description="Mitochondrion">
    <location>
        <begin position="1"/>
        <end position="45"/>
    </location>
</feature>
<feature type="chain" id="PRO_0000301830" description="Protein FMP52-2, mitochondrial">
    <location>
        <begin position="46"/>
        <end position="229"/>
    </location>
</feature>
<organism>
    <name type="scientific">Scheffersomyces stipitis (strain ATCC 58785 / CBS 6054 / NBRC 10063 / NRRL Y-11545)</name>
    <name type="common">Yeast</name>
    <name type="synonym">Pichia stipitis</name>
    <dbReference type="NCBI Taxonomy" id="322104"/>
    <lineage>
        <taxon>Eukaryota</taxon>
        <taxon>Fungi</taxon>
        <taxon>Dikarya</taxon>
        <taxon>Ascomycota</taxon>
        <taxon>Saccharomycotina</taxon>
        <taxon>Pichiomycetes</taxon>
        <taxon>Debaryomycetaceae</taxon>
        <taxon>Scheffersomyces</taxon>
    </lineage>
</organism>
<protein>
    <recommendedName>
        <fullName>Protein FMP52-2, mitochondrial</fullName>
    </recommendedName>
</protein>
<keyword id="KW-0472">Membrane</keyword>
<keyword id="KW-0496">Mitochondrion</keyword>
<keyword id="KW-1000">Mitochondrion outer membrane</keyword>
<keyword id="KW-1185">Reference proteome</keyword>
<keyword id="KW-0809">Transit peptide</keyword>
<evidence type="ECO:0000250" key="1"/>
<evidence type="ECO:0000305" key="2"/>
<dbReference type="EMBL" id="CP000497">
    <property type="protein sequence ID" value="ABN65540.2"/>
    <property type="molecule type" value="Genomic_DNA"/>
</dbReference>
<dbReference type="RefSeq" id="XP_001383569.2">
    <property type="nucleotide sequence ID" value="XM_001383532.1"/>
</dbReference>
<dbReference type="SMR" id="A3LSB6"/>
<dbReference type="FunCoup" id="A3LSB6">
    <property type="interactions" value="99"/>
</dbReference>
<dbReference type="STRING" id="322104.A3LSB6"/>
<dbReference type="GeneID" id="4838069"/>
<dbReference type="KEGG" id="pic:PICST_57883"/>
<dbReference type="eggNOG" id="KOG4039">
    <property type="taxonomic scope" value="Eukaryota"/>
</dbReference>
<dbReference type="HOGENOM" id="CLU_071330_2_2_1"/>
<dbReference type="InParanoid" id="A3LSB6"/>
<dbReference type="OMA" id="LGRTEWP"/>
<dbReference type="OrthoDB" id="430436at2759"/>
<dbReference type="Proteomes" id="UP000002258">
    <property type="component" value="Chromosome 3"/>
</dbReference>
<dbReference type="GO" id="GO:0005741">
    <property type="term" value="C:mitochondrial outer membrane"/>
    <property type="evidence" value="ECO:0007669"/>
    <property type="project" value="UniProtKB-SubCell"/>
</dbReference>
<dbReference type="GO" id="GO:0051170">
    <property type="term" value="P:import into nucleus"/>
    <property type="evidence" value="ECO:0007669"/>
    <property type="project" value="TreeGrafter"/>
</dbReference>
<dbReference type="Gene3D" id="3.40.50.720">
    <property type="entry name" value="NAD(P)-binding Rossmann-like Domain"/>
    <property type="match status" value="1"/>
</dbReference>
<dbReference type="InterPro" id="IPR014843">
    <property type="entry name" value="Him1/Fmp52"/>
</dbReference>
<dbReference type="InterPro" id="IPR036291">
    <property type="entry name" value="NAD(P)-bd_dom_sf"/>
</dbReference>
<dbReference type="PANTHER" id="PTHR14097">
    <property type="entry name" value="OXIDOREDUCTASE HTATIP2"/>
    <property type="match status" value="1"/>
</dbReference>
<dbReference type="PANTHER" id="PTHR14097:SF7">
    <property type="entry name" value="OXIDOREDUCTASE HTATIP2"/>
    <property type="match status" value="1"/>
</dbReference>
<dbReference type="Pfam" id="PF08732">
    <property type="entry name" value="HIM1"/>
    <property type="match status" value="1"/>
</dbReference>
<dbReference type="SUPFAM" id="SSF51735">
    <property type="entry name" value="NAD(P)-binding Rossmann-fold domains"/>
    <property type="match status" value="1"/>
</dbReference>
<comment type="subcellular location">
    <subcellularLocation>
        <location evidence="1">Mitochondrion outer membrane</location>
        <topology evidence="1">Peripheral membrane protein</topology>
    </subcellularLocation>
</comment>
<comment type="similarity">
    <text evidence="2">Belongs to the FMP52 family.</text>
</comment>
<name>FM522_PICST</name>